<feature type="initiator methionine" description="Removed" evidence="1">
    <location>
        <position position="1"/>
    </location>
</feature>
<feature type="chain" id="PRO_0000072925" description="Glycine--tRNA ligase beta subunit">
    <location>
        <begin position="2"/>
        <end position="689"/>
    </location>
</feature>
<name>SYGB_SALTI</name>
<reference key="1">
    <citation type="journal article" date="2001" name="Nature">
        <title>Complete genome sequence of a multiple drug resistant Salmonella enterica serovar Typhi CT18.</title>
        <authorList>
            <person name="Parkhill J."/>
            <person name="Dougan G."/>
            <person name="James K.D."/>
            <person name="Thomson N.R."/>
            <person name="Pickard D."/>
            <person name="Wain J."/>
            <person name="Churcher C.M."/>
            <person name="Mungall K.L."/>
            <person name="Bentley S.D."/>
            <person name="Holden M.T.G."/>
            <person name="Sebaihia M."/>
            <person name="Baker S."/>
            <person name="Basham D."/>
            <person name="Brooks K."/>
            <person name="Chillingworth T."/>
            <person name="Connerton P."/>
            <person name="Cronin A."/>
            <person name="Davis P."/>
            <person name="Davies R.M."/>
            <person name="Dowd L."/>
            <person name="White N."/>
            <person name="Farrar J."/>
            <person name="Feltwell T."/>
            <person name="Hamlin N."/>
            <person name="Haque A."/>
            <person name="Hien T.T."/>
            <person name="Holroyd S."/>
            <person name="Jagels K."/>
            <person name="Krogh A."/>
            <person name="Larsen T.S."/>
            <person name="Leather S."/>
            <person name="Moule S."/>
            <person name="O'Gaora P."/>
            <person name="Parry C."/>
            <person name="Quail M.A."/>
            <person name="Rutherford K.M."/>
            <person name="Simmonds M."/>
            <person name="Skelton J."/>
            <person name="Stevens K."/>
            <person name="Whitehead S."/>
            <person name="Barrell B.G."/>
        </authorList>
    </citation>
    <scope>NUCLEOTIDE SEQUENCE [LARGE SCALE GENOMIC DNA]</scope>
    <source>
        <strain>CT18</strain>
    </source>
</reference>
<reference key="2">
    <citation type="journal article" date="2003" name="J. Bacteriol.">
        <title>Comparative genomics of Salmonella enterica serovar Typhi strains Ty2 and CT18.</title>
        <authorList>
            <person name="Deng W."/>
            <person name="Liou S.-R."/>
            <person name="Plunkett G. III"/>
            <person name="Mayhew G.F."/>
            <person name="Rose D.J."/>
            <person name="Burland V."/>
            <person name="Kodoyianni V."/>
            <person name="Schwartz D.C."/>
            <person name="Blattner F.R."/>
        </authorList>
    </citation>
    <scope>NUCLEOTIDE SEQUENCE [LARGE SCALE GENOMIC DNA]</scope>
    <source>
        <strain>ATCC 700931 / Ty2</strain>
    </source>
</reference>
<accession>Q8Z2B3</accession>
<comment type="catalytic activity">
    <reaction evidence="2">
        <text>tRNA(Gly) + glycine + ATP = glycyl-tRNA(Gly) + AMP + diphosphate</text>
        <dbReference type="Rhea" id="RHEA:16013"/>
        <dbReference type="Rhea" id="RHEA-COMP:9664"/>
        <dbReference type="Rhea" id="RHEA-COMP:9683"/>
        <dbReference type="ChEBI" id="CHEBI:30616"/>
        <dbReference type="ChEBI" id="CHEBI:33019"/>
        <dbReference type="ChEBI" id="CHEBI:57305"/>
        <dbReference type="ChEBI" id="CHEBI:78442"/>
        <dbReference type="ChEBI" id="CHEBI:78522"/>
        <dbReference type="ChEBI" id="CHEBI:456215"/>
        <dbReference type="EC" id="6.1.1.14"/>
    </reaction>
</comment>
<comment type="subunit">
    <text evidence="2">Tetramer of two alpha and two beta subunits.</text>
</comment>
<comment type="subcellular location">
    <subcellularLocation>
        <location evidence="2">Cytoplasm</location>
    </subcellularLocation>
</comment>
<comment type="similarity">
    <text evidence="2">Belongs to the class-II aminoacyl-tRNA synthetase family.</text>
</comment>
<keyword id="KW-0030">Aminoacyl-tRNA synthetase</keyword>
<keyword id="KW-0067">ATP-binding</keyword>
<keyword id="KW-0963">Cytoplasm</keyword>
<keyword id="KW-0436">Ligase</keyword>
<keyword id="KW-0547">Nucleotide-binding</keyword>
<keyword id="KW-0648">Protein biosynthesis</keyword>
<dbReference type="EC" id="6.1.1.14" evidence="2"/>
<dbReference type="EMBL" id="AL513382">
    <property type="protein sequence ID" value="CAD07973.1"/>
    <property type="molecule type" value="Genomic_DNA"/>
</dbReference>
<dbReference type="EMBL" id="AE014613">
    <property type="protein sequence ID" value="AAO71343.1"/>
    <property type="molecule type" value="Genomic_DNA"/>
</dbReference>
<dbReference type="RefSeq" id="NP_458271.1">
    <property type="nucleotide sequence ID" value="NC_003198.1"/>
</dbReference>
<dbReference type="RefSeq" id="WP_001291805.1">
    <property type="nucleotide sequence ID" value="NZ_WSUR01000001.1"/>
</dbReference>
<dbReference type="SMR" id="Q8Z2B3"/>
<dbReference type="STRING" id="220341.gene:17587985"/>
<dbReference type="KEGG" id="stt:t3864"/>
<dbReference type="KEGG" id="sty:STY4144"/>
<dbReference type="PATRIC" id="fig|220341.7.peg.4234"/>
<dbReference type="eggNOG" id="COG0751">
    <property type="taxonomic scope" value="Bacteria"/>
</dbReference>
<dbReference type="HOGENOM" id="CLU_007220_2_2_6"/>
<dbReference type="OMA" id="LPIPKRM"/>
<dbReference type="OrthoDB" id="9775440at2"/>
<dbReference type="Proteomes" id="UP000000541">
    <property type="component" value="Chromosome"/>
</dbReference>
<dbReference type="Proteomes" id="UP000002670">
    <property type="component" value="Chromosome"/>
</dbReference>
<dbReference type="GO" id="GO:0005829">
    <property type="term" value="C:cytosol"/>
    <property type="evidence" value="ECO:0007669"/>
    <property type="project" value="TreeGrafter"/>
</dbReference>
<dbReference type="GO" id="GO:0004814">
    <property type="term" value="F:arginine-tRNA ligase activity"/>
    <property type="evidence" value="ECO:0007669"/>
    <property type="project" value="InterPro"/>
</dbReference>
<dbReference type="GO" id="GO:0005524">
    <property type="term" value="F:ATP binding"/>
    <property type="evidence" value="ECO:0007669"/>
    <property type="project" value="UniProtKB-UniRule"/>
</dbReference>
<dbReference type="GO" id="GO:0004820">
    <property type="term" value="F:glycine-tRNA ligase activity"/>
    <property type="evidence" value="ECO:0007669"/>
    <property type="project" value="UniProtKB-UniRule"/>
</dbReference>
<dbReference type="GO" id="GO:0006420">
    <property type="term" value="P:arginyl-tRNA aminoacylation"/>
    <property type="evidence" value="ECO:0007669"/>
    <property type="project" value="InterPro"/>
</dbReference>
<dbReference type="GO" id="GO:0006426">
    <property type="term" value="P:glycyl-tRNA aminoacylation"/>
    <property type="evidence" value="ECO:0007669"/>
    <property type="project" value="UniProtKB-UniRule"/>
</dbReference>
<dbReference type="HAMAP" id="MF_00255">
    <property type="entry name" value="Gly_tRNA_synth_beta"/>
    <property type="match status" value="1"/>
</dbReference>
<dbReference type="InterPro" id="IPR008909">
    <property type="entry name" value="DALR_anticod-bd"/>
</dbReference>
<dbReference type="InterPro" id="IPR015944">
    <property type="entry name" value="Gly-tRNA-synth_bsu"/>
</dbReference>
<dbReference type="InterPro" id="IPR006194">
    <property type="entry name" value="Gly-tRNA-synth_heterodimer"/>
</dbReference>
<dbReference type="NCBIfam" id="TIGR00211">
    <property type="entry name" value="glyS"/>
    <property type="match status" value="1"/>
</dbReference>
<dbReference type="PANTHER" id="PTHR30075:SF2">
    <property type="entry name" value="GLYCINE--TRNA LIGASE, CHLOROPLASTIC_MITOCHONDRIAL 2"/>
    <property type="match status" value="1"/>
</dbReference>
<dbReference type="PANTHER" id="PTHR30075">
    <property type="entry name" value="GLYCYL-TRNA SYNTHETASE"/>
    <property type="match status" value="1"/>
</dbReference>
<dbReference type="Pfam" id="PF05746">
    <property type="entry name" value="DALR_1"/>
    <property type="match status" value="1"/>
</dbReference>
<dbReference type="Pfam" id="PF02092">
    <property type="entry name" value="tRNA_synt_2f"/>
    <property type="match status" value="1"/>
</dbReference>
<dbReference type="PRINTS" id="PR01045">
    <property type="entry name" value="TRNASYNTHGB"/>
</dbReference>
<dbReference type="SUPFAM" id="SSF109604">
    <property type="entry name" value="HD-domain/PDEase-like"/>
    <property type="match status" value="1"/>
</dbReference>
<dbReference type="PROSITE" id="PS50861">
    <property type="entry name" value="AA_TRNA_LIGASE_II_GLYAB"/>
    <property type="match status" value="1"/>
</dbReference>
<sequence>MSEKTFLVEIGTEELPPKALRSLAESFAANFTAELDNAGLAHGTVQWFAAPRRLALKVANLAEAQPDREIEKRGPAIAQAFDAEGKPSKAAEGWARGCGITVDQAERLTTDKGEWLLYRAYVKGESTEALLPNMVATSLAKLPIPKLMRWGASDVHFVRPVHTVTLLLGDKVIPATILGIQSDRVIRGHRFMGEPEFTIDNADQYPEILRERGKVIADYEERKAKIKADAEEAARKIGGNADLSESLLEEVASLVEWPVVLTAKFEEKFLAVPSEALVYTMKGDQKYFPVYANDGKLLPNFIFVANIESKDPQQIISGNEKVVRPRLADAEFFFNTDRKKRLEDNLPRLQTVLFQQQLGTLRDKTDRIQALAGWIAEQIGADVNHATRAGLLSKCDLMTNMVFEFTDTQGVMGMHYARHDGEAEDVAVALNEQYQPRFAGDDLPSNPVACALAIADKMDTLAGIFGIGQHPKGDKDPFALRRAALGVLRIIVEKNLNLDLQTLTEEAVRLYGDKLTNASVVDDVIDFMLGRFRAWYQDEGYSVDTIQAVLARRPTRPADFDARMKAVSHFRTLEEASALAAANKRVSNILAKATEPLNDIVHASVLKEAAEIELARHLVVLRDKLQPYFADGRYQEALIELAALRAPVDEFFENVMVNAEEKDIRINRLTLLSKLRELFLQVADISLLQ</sequence>
<protein>
    <recommendedName>
        <fullName evidence="2">Glycine--tRNA ligase beta subunit</fullName>
        <ecNumber evidence="2">6.1.1.14</ecNumber>
    </recommendedName>
    <alternativeName>
        <fullName evidence="2">Glycyl-tRNA synthetase beta subunit</fullName>
        <shortName evidence="2">GlyRS</shortName>
    </alternativeName>
</protein>
<proteinExistence type="inferred from homology"/>
<organism>
    <name type="scientific">Salmonella typhi</name>
    <dbReference type="NCBI Taxonomy" id="90370"/>
    <lineage>
        <taxon>Bacteria</taxon>
        <taxon>Pseudomonadati</taxon>
        <taxon>Pseudomonadota</taxon>
        <taxon>Gammaproteobacteria</taxon>
        <taxon>Enterobacterales</taxon>
        <taxon>Enterobacteriaceae</taxon>
        <taxon>Salmonella</taxon>
    </lineage>
</organism>
<gene>
    <name evidence="2" type="primary">glyS</name>
    <name type="ordered locus">STY4144</name>
    <name type="ordered locus">t3864</name>
</gene>
<evidence type="ECO:0000250" key="1"/>
<evidence type="ECO:0000255" key="2">
    <source>
        <dbReference type="HAMAP-Rule" id="MF_00255"/>
    </source>
</evidence>